<name>CF276_MOUSE</name>
<proteinExistence type="evidence at protein level"/>
<sequence length="168" mass="18931">MLQPQETFSNPALRDEDKHLGNLWASKKSLYKNPAHLAQQQDPWSRLSSTPTATSRSRDTFFDSKIPKDDLDFRLATLYNHHTGAFKNKTEILLHQETIEDIQGTKIQFPGECFHAPSAPITSRTTIRHWINPKKESIHSIQGSIVSPHTAATNGGYSRKNDGGFFST</sequence>
<evidence type="ECO:0000250" key="1">
    <source>
        <dbReference type="UniProtKB" id="E1B9I5"/>
    </source>
</evidence>
<evidence type="ECO:0000250" key="2">
    <source>
        <dbReference type="UniProtKB" id="Q5T5A4"/>
    </source>
</evidence>
<evidence type="ECO:0000256" key="3">
    <source>
        <dbReference type="SAM" id="MobiDB-lite"/>
    </source>
</evidence>
<evidence type="ECO:0000269" key="4">
    <source>
    </source>
</evidence>
<evidence type="ECO:0000269" key="5">
    <source>
    </source>
</evidence>
<evidence type="ECO:0000269" key="6">
    <source>
    </source>
</evidence>
<evidence type="ECO:0000269" key="7">
    <source>
    </source>
</evidence>
<evidence type="ECO:0000312" key="8">
    <source>
        <dbReference type="MGI" id="MGI:1922754"/>
    </source>
</evidence>
<evidence type="ECO:0007744" key="9">
    <source>
        <dbReference type="PDB" id="8I7O"/>
    </source>
</evidence>
<evidence type="ECO:0007744" key="10">
    <source>
        <dbReference type="PDB" id="8I7R"/>
    </source>
</evidence>
<evidence type="ECO:0007744" key="11">
    <source>
        <dbReference type="PDB" id="8IYJ"/>
    </source>
</evidence>
<evidence type="ECO:0007744" key="12">
    <source>
        <dbReference type="PDB" id="8TO0"/>
    </source>
</evidence>
<comment type="function">
    <text evidence="2 4 5 6 7">Microtubule inner protein (MIP) part of the dynein-decorated doublet microtubules (DMTs) in cilia axoneme, which is required for motile cilia beating (PubMed:37295417, PubMed:37865089, PubMed:37989994). May play an important role for the maintenance of myelin-axon integrity (PubMed:31199454). May affect intracellular Ca(2+) homeostasis (By similarity).</text>
</comment>
<comment type="subunit">
    <text evidence="5 6 7">Microtubule inner protein component of sperm flagellar doublet microtubules.</text>
</comment>
<comment type="subcellular location">
    <subcellularLocation>
        <location evidence="1">Cytoplasm</location>
        <location evidence="1">Cytoskeleton</location>
        <location evidence="1">Cilium axoneme</location>
    </subcellularLocation>
    <subcellularLocation>
        <location evidence="5 6 7">Cytoplasm</location>
        <location evidence="5 6 7">Cytoskeleton</location>
        <location evidence="5 6 7">Flagellum axoneme</location>
    </subcellularLocation>
    <subcellularLocation>
        <location evidence="2">Cytoplasm</location>
    </subcellularLocation>
    <subcellularLocation>
        <location evidence="2">Cytoplasm</location>
        <location evidence="2">Cytoskeleton</location>
    </subcellularLocation>
</comment>
<comment type="tissue specificity">
    <text evidence="4">Predominantly expressed in nervous system tissues, such as the spinal cord, cerebrum, cerebellum, and sciatic nerve.</text>
</comment>
<dbReference type="EMBL" id="AK005946">
    <property type="protein sequence ID" value="BAB24330.1"/>
    <property type="molecule type" value="mRNA"/>
</dbReference>
<dbReference type="EMBL" id="AL683823">
    <property type="status" value="NOT_ANNOTATED_CDS"/>
    <property type="molecule type" value="Genomic_DNA"/>
</dbReference>
<dbReference type="EMBL" id="BC116223">
    <property type="protein sequence ID" value="AAI16224.1"/>
    <property type="molecule type" value="mRNA"/>
</dbReference>
<dbReference type="CCDS" id="CCDS51046.1"/>
<dbReference type="RefSeq" id="NP_083590.1">
    <property type="nucleotide sequence ID" value="NM_029314.1"/>
</dbReference>
<dbReference type="PDB" id="8I7O">
    <property type="method" value="EM"/>
    <property type="resolution" value="4.50 A"/>
    <property type="chains" value="N2/N3=1-168"/>
</dbReference>
<dbReference type="PDB" id="8I7R">
    <property type="method" value="EM"/>
    <property type="resolution" value="6.50 A"/>
    <property type="chains" value="N1/N2/N3/N4=1-168"/>
</dbReference>
<dbReference type="PDB" id="8IYJ">
    <property type="method" value="EM"/>
    <property type="resolution" value="3.50 A"/>
    <property type="chains" value="q/r/s=1-168"/>
</dbReference>
<dbReference type="PDB" id="8TO0">
    <property type="method" value="EM"/>
    <property type="resolution" value="7.70 A"/>
    <property type="chains" value="EH/EW/El=1-168"/>
</dbReference>
<dbReference type="PDBsum" id="8I7O"/>
<dbReference type="PDBsum" id="8I7R"/>
<dbReference type="PDBsum" id="8IYJ"/>
<dbReference type="PDBsum" id="8TO0"/>
<dbReference type="EMDB" id="EMD-35229"/>
<dbReference type="EMDB" id="EMD-35230"/>
<dbReference type="EMDB" id="EMD-35823"/>
<dbReference type="EMDB" id="EMD-41431"/>
<dbReference type="SMR" id="Q9DAD0"/>
<dbReference type="FunCoup" id="Q9DAD0">
    <property type="interactions" value="171"/>
</dbReference>
<dbReference type="STRING" id="10090.ENSMUSP00000029485"/>
<dbReference type="iPTMnet" id="Q9DAD0"/>
<dbReference type="PhosphoSitePlus" id="Q9DAD0"/>
<dbReference type="PaxDb" id="10090-ENSMUSP00000029485"/>
<dbReference type="Antibodypedia" id="33746">
    <property type="antibodies" value="42 antibodies from 9 providers"/>
</dbReference>
<dbReference type="Ensembl" id="ENSMUST00000029485.6">
    <property type="protein sequence ID" value="ENSMUSP00000029485.6"/>
    <property type="gene ID" value="ENSMUSG00000027886.8"/>
</dbReference>
<dbReference type="GeneID" id="75504"/>
<dbReference type="KEGG" id="mmu:75504"/>
<dbReference type="UCSC" id="uc008qze.2">
    <property type="organism name" value="mouse"/>
</dbReference>
<dbReference type="AGR" id="MGI:1922754"/>
<dbReference type="CTD" id="127003"/>
<dbReference type="MGI" id="MGI:1922754">
    <property type="gene designation" value="Cfap276"/>
</dbReference>
<dbReference type="VEuPathDB" id="HostDB:ENSMUSG00000027886"/>
<dbReference type="eggNOG" id="ENOG502S2J1">
    <property type="taxonomic scope" value="Eukaryota"/>
</dbReference>
<dbReference type="GeneTree" id="ENSGT01030000234625"/>
<dbReference type="HOGENOM" id="CLU_133894_0_0_1"/>
<dbReference type="InParanoid" id="Q9DAD0"/>
<dbReference type="OMA" id="QWINPKK"/>
<dbReference type="OrthoDB" id="10013535at2759"/>
<dbReference type="PhylomeDB" id="Q9DAD0"/>
<dbReference type="TreeFam" id="TF325898"/>
<dbReference type="BioGRID-ORCS" id="75504">
    <property type="hits" value="2 hits in 76 CRISPR screens"/>
</dbReference>
<dbReference type="PRO" id="PR:Q9DAD0"/>
<dbReference type="Proteomes" id="UP000000589">
    <property type="component" value="Chromosome 3"/>
</dbReference>
<dbReference type="RNAct" id="Q9DAD0">
    <property type="molecule type" value="protein"/>
</dbReference>
<dbReference type="Bgee" id="ENSMUSG00000027886">
    <property type="expression patterns" value="Expressed in seminiferous tubule of testis and 48 other cell types or tissues"/>
</dbReference>
<dbReference type="GO" id="GO:0160112">
    <property type="term" value="C:axonemal B tubule inner sheath"/>
    <property type="evidence" value="ECO:0000314"/>
    <property type="project" value="UniProtKB"/>
</dbReference>
<dbReference type="GO" id="GO:0005879">
    <property type="term" value="C:axonemal microtubule"/>
    <property type="evidence" value="ECO:0000250"/>
    <property type="project" value="UniProtKB"/>
</dbReference>
<dbReference type="GO" id="GO:0005737">
    <property type="term" value="C:cytoplasm"/>
    <property type="evidence" value="ECO:0000250"/>
    <property type="project" value="UniProtKB"/>
</dbReference>
<dbReference type="GO" id="GO:0005856">
    <property type="term" value="C:cytoskeleton"/>
    <property type="evidence" value="ECO:0000250"/>
    <property type="project" value="UniProtKB"/>
</dbReference>
<dbReference type="GO" id="GO:0036126">
    <property type="term" value="C:sperm flagellum"/>
    <property type="evidence" value="ECO:0000314"/>
    <property type="project" value="UniProtKB"/>
</dbReference>
<dbReference type="GO" id="GO:0030317">
    <property type="term" value="P:flagellated sperm motility"/>
    <property type="evidence" value="ECO:0000314"/>
    <property type="project" value="UniProtKB"/>
</dbReference>
<dbReference type="InterPro" id="IPR022179">
    <property type="entry name" value="CFAP276"/>
</dbReference>
<dbReference type="Pfam" id="PF12494">
    <property type="entry name" value="DUF3695"/>
    <property type="match status" value="1"/>
</dbReference>
<feature type="chain" id="PRO_0000303066" description="Cilia- and flagella-associated protein 276">
    <location>
        <begin position="1"/>
        <end position="168"/>
    </location>
</feature>
<feature type="region of interest" description="Disordered" evidence="3">
    <location>
        <begin position="35"/>
        <end position="61"/>
    </location>
</feature>
<feature type="region of interest" description="Disordered" evidence="3">
    <location>
        <begin position="149"/>
        <end position="168"/>
    </location>
</feature>
<feature type="compositionally biased region" description="Polar residues" evidence="3">
    <location>
        <begin position="38"/>
        <end position="55"/>
    </location>
</feature>
<feature type="mutagenesis site" description="Knockin mice develop peripheral neuropathy that mimic the phenotype of intermediate forms of Charcot-Marie-Tooth disease. Knockin mice shown impairments in motor and neuromuscular functions, and aberrant myelination and axonal phenotypes." evidence="4">
    <original>I</original>
    <variation>N</variation>
    <location>
        <position position="121"/>
    </location>
</feature>
<protein>
    <recommendedName>
        <fullName evidence="8">Cilia- and flagella-associated protein 276</fullName>
    </recommendedName>
</protein>
<keyword id="KW-0002">3D-structure</keyword>
<keyword id="KW-0966">Cell projection</keyword>
<keyword id="KW-0969">Cilium</keyword>
<keyword id="KW-0963">Cytoplasm</keyword>
<keyword id="KW-0206">Cytoskeleton</keyword>
<keyword id="KW-0282">Flagellum</keyword>
<keyword id="KW-1185">Reference proteome</keyword>
<gene>
    <name evidence="8" type="primary">Cfap276</name>
</gene>
<organism>
    <name type="scientific">Mus musculus</name>
    <name type="common">Mouse</name>
    <dbReference type="NCBI Taxonomy" id="10090"/>
    <lineage>
        <taxon>Eukaryota</taxon>
        <taxon>Metazoa</taxon>
        <taxon>Chordata</taxon>
        <taxon>Craniata</taxon>
        <taxon>Vertebrata</taxon>
        <taxon>Euteleostomi</taxon>
        <taxon>Mammalia</taxon>
        <taxon>Eutheria</taxon>
        <taxon>Euarchontoglires</taxon>
        <taxon>Glires</taxon>
        <taxon>Rodentia</taxon>
        <taxon>Myomorpha</taxon>
        <taxon>Muroidea</taxon>
        <taxon>Muridae</taxon>
        <taxon>Murinae</taxon>
        <taxon>Mus</taxon>
        <taxon>Mus</taxon>
    </lineage>
</organism>
<accession>Q9DAD0</accession>
<reference key="1">
    <citation type="journal article" date="2005" name="Science">
        <title>The transcriptional landscape of the mammalian genome.</title>
        <authorList>
            <person name="Carninci P."/>
            <person name="Kasukawa T."/>
            <person name="Katayama S."/>
            <person name="Gough J."/>
            <person name="Frith M.C."/>
            <person name="Maeda N."/>
            <person name="Oyama R."/>
            <person name="Ravasi T."/>
            <person name="Lenhard B."/>
            <person name="Wells C."/>
            <person name="Kodzius R."/>
            <person name="Shimokawa K."/>
            <person name="Bajic V.B."/>
            <person name="Brenner S.E."/>
            <person name="Batalov S."/>
            <person name="Forrest A.R."/>
            <person name="Zavolan M."/>
            <person name="Davis M.J."/>
            <person name="Wilming L.G."/>
            <person name="Aidinis V."/>
            <person name="Allen J.E."/>
            <person name="Ambesi-Impiombato A."/>
            <person name="Apweiler R."/>
            <person name="Aturaliya R.N."/>
            <person name="Bailey T.L."/>
            <person name="Bansal M."/>
            <person name="Baxter L."/>
            <person name="Beisel K.W."/>
            <person name="Bersano T."/>
            <person name="Bono H."/>
            <person name="Chalk A.M."/>
            <person name="Chiu K.P."/>
            <person name="Choudhary V."/>
            <person name="Christoffels A."/>
            <person name="Clutterbuck D.R."/>
            <person name="Crowe M.L."/>
            <person name="Dalla E."/>
            <person name="Dalrymple B.P."/>
            <person name="de Bono B."/>
            <person name="Della Gatta G."/>
            <person name="di Bernardo D."/>
            <person name="Down T."/>
            <person name="Engstrom P."/>
            <person name="Fagiolini M."/>
            <person name="Faulkner G."/>
            <person name="Fletcher C.F."/>
            <person name="Fukushima T."/>
            <person name="Furuno M."/>
            <person name="Futaki S."/>
            <person name="Gariboldi M."/>
            <person name="Georgii-Hemming P."/>
            <person name="Gingeras T.R."/>
            <person name="Gojobori T."/>
            <person name="Green R.E."/>
            <person name="Gustincich S."/>
            <person name="Harbers M."/>
            <person name="Hayashi Y."/>
            <person name="Hensch T.K."/>
            <person name="Hirokawa N."/>
            <person name="Hill D."/>
            <person name="Huminiecki L."/>
            <person name="Iacono M."/>
            <person name="Ikeo K."/>
            <person name="Iwama A."/>
            <person name="Ishikawa T."/>
            <person name="Jakt M."/>
            <person name="Kanapin A."/>
            <person name="Katoh M."/>
            <person name="Kawasawa Y."/>
            <person name="Kelso J."/>
            <person name="Kitamura H."/>
            <person name="Kitano H."/>
            <person name="Kollias G."/>
            <person name="Krishnan S.P."/>
            <person name="Kruger A."/>
            <person name="Kummerfeld S.K."/>
            <person name="Kurochkin I.V."/>
            <person name="Lareau L.F."/>
            <person name="Lazarevic D."/>
            <person name="Lipovich L."/>
            <person name="Liu J."/>
            <person name="Liuni S."/>
            <person name="McWilliam S."/>
            <person name="Madan Babu M."/>
            <person name="Madera M."/>
            <person name="Marchionni L."/>
            <person name="Matsuda H."/>
            <person name="Matsuzawa S."/>
            <person name="Miki H."/>
            <person name="Mignone F."/>
            <person name="Miyake S."/>
            <person name="Morris K."/>
            <person name="Mottagui-Tabar S."/>
            <person name="Mulder N."/>
            <person name="Nakano N."/>
            <person name="Nakauchi H."/>
            <person name="Ng P."/>
            <person name="Nilsson R."/>
            <person name="Nishiguchi S."/>
            <person name="Nishikawa S."/>
            <person name="Nori F."/>
            <person name="Ohara O."/>
            <person name="Okazaki Y."/>
            <person name="Orlando V."/>
            <person name="Pang K.C."/>
            <person name="Pavan W.J."/>
            <person name="Pavesi G."/>
            <person name="Pesole G."/>
            <person name="Petrovsky N."/>
            <person name="Piazza S."/>
            <person name="Reed J."/>
            <person name="Reid J.F."/>
            <person name="Ring B.Z."/>
            <person name="Ringwald M."/>
            <person name="Rost B."/>
            <person name="Ruan Y."/>
            <person name="Salzberg S.L."/>
            <person name="Sandelin A."/>
            <person name="Schneider C."/>
            <person name="Schoenbach C."/>
            <person name="Sekiguchi K."/>
            <person name="Semple C.A."/>
            <person name="Seno S."/>
            <person name="Sessa L."/>
            <person name="Sheng Y."/>
            <person name="Shibata Y."/>
            <person name="Shimada H."/>
            <person name="Shimada K."/>
            <person name="Silva D."/>
            <person name="Sinclair B."/>
            <person name="Sperling S."/>
            <person name="Stupka E."/>
            <person name="Sugiura K."/>
            <person name="Sultana R."/>
            <person name="Takenaka Y."/>
            <person name="Taki K."/>
            <person name="Tammoja K."/>
            <person name="Tan S.L."/>
            <person name="Tang S."/>
            <person name="Taylor M.S."/>
            <person name="Tegner J."/>
            <person name="Teichmann S.A."/>
            <person name="Ueda H.R."/>
            <person name="van Nimwegen E."/>
            <person name="Verardo R."/>
            <person name="Wei C.L."/>
            <person name="Yagi K."/>
            <person name="Yamanishi H."/>
            <person name="Zabarovsky E."/>
            <person name="Zhu S."/>
            <person name="Zimmer A."/>
            <person name="Hide W."/>
            <person name="Bult C."/>
            <person name="Grimmond S.M."/>
            <person name="Teasdale R.D."/>
            <person name="Liu E.T."/>
            <person name="Brusic V."/>
            <person name="Quackenbush J."/>
            <person name="Wahlestedt C."/>
            <person name="Mattick J.S."/>
            <person name="Hume D.A."/>
            <person name="Kai C."/>
            <person name="Sasaki D."/>
            <person name="Tomaru Y."/>
            <person name="Fukuda S."/>
            <person name="Kanamori-Katayama M."/>
            <person name="Suzuki M."/>
            <person name="Aoki J."/>
            <person name="Arakawa T."/>
            <person name="Iida J."/>
            <person name="Imamura K."/>
            <person name="Itoh M."/>
            <person name="Kato T."/>
            <person name="Kawaji H."/>
            <person name="Kawagashira N."/>
            <person name="Kawashima T."/>
            <person name="Kojima M."/>
            <person name="Kondo S."/>
            <person name="Konno H."/>
            <person name="Nakano K."/>
            <person name="Ninomiya N."/>
            <person name="Nishio T."/>
            <person name="Okada M."/>
            <person name="Plessy C."/>
            <person name="Shibata K."/>
            <person name="Shiraki T."/>
            <person name="Suzuki S."/>
            <person name="Tagami M."/>
            <person name="Waki K."/>
            <person name="Watahiki A."/>
            <person name="Okamura-Oho Y."/>
            <person name="Suzuki H."/>
            <person name="Kawai J."/>
            <person name="Hayashizaki Y."/>
        </authorList>
    </citation>
    <scope>NUCLEOTIDE SEQUENCE [LARGE SCALE MRNA]</scope>
    <source>
        <strain>C57BL/6J</strain>
        <tissue>Testis</tissue>
    </source>
</reference>
<reference key="2">
    <citation type="journal article" date="2009" name="PLoS Biol.">
        <title>Lineage-specific biology revealed by a finished genome assembly of the mouse.</title>
        <authorList>
            <person name="Church D.M."/>
            <person name="Goodstadt L."/>
            <person name="Hillier L.W."/>
            <person name="Zody M.C."/>
            <person name="Goldstein S."/>
            <person name="She X."/>
            <person name="Bult C.J."/>
            <person name="Agarwala R."/>
            <person name="Cherry J.L."/>
            <person name="DiCuccio M."/>
            <person name="Hlavina W."/>
            <person name="Kapustin Y."/>
            <person name="Meric P."/>
            <person name="Maglott D."/>
            <person name="Birtle Z."/>
            <person name="Marques A.C."/>
            <person name="Graves T."/>
            <person name="Zhou S."/>
            <person name="Teague B."/>
            <person name="Potamousis K."/>
            <person name="Churas C."/>
            <person name="Place M."/>
            <person name="Herschleb J."/>
            <person name="Runnheim R."/>
            <person name="Forrest D."/>
            <person name="Amos-Landgraf J."/>
            <person name="Schwartz D.C."/>
            <person name="Cheng Z."/>
            <person name="Lindblad-Toh K."/>
            <person name="Eichler E.E."/>
            <person name="Ponting C.P."/>
        </authorList>
    </citation>
    <scope>NUCLEOTIDE SEQUENCE [LARGE SCALE GENOMIC DNA]</scope>
    <source>
        <strain>C57BL/6J</strain>
    </source>
</reference>
<reference key="3">
    <citation type="journal article" date="2004" name="Genome Res.">
        <title>The status, quality, and expansion of the NIH full-length cDNA project: the Mammalian Gene Collection (MGC).</title>
        <authorList>
            <consortium name="The MGC Project Team"/>
        </authorList>
    </citation>
    <scope>NUCLEOTIDE SEQUENCE [LARGE SCALE MRNA]</scope>
</reference>
<reference key="4">
    <citation type="journal article" date="2019" name="Brain">
        <title>Mutations in C1orf194, encoding a calcium regulator, cause dominant Charcot-Marie-Tooth disease.</title>
        <authorList>
            <person name="Sun S.C."/>
            <person name="Ma D."/>
            <person name="Li M.Y."/>
            <person name="Zhang R.X."/>
            <person name="Huang C."/>
            <person name="Huang H.J."/>
            <person name="Xie Y.Z."/>
            <person name="Wang Z.J."/>
            <person name="Liu J."/>
            <person name="Cai D.C."/>
            <person name="Liu C.X."/>
            <person name="Yang Q."/>
            <person name="Bao F.X."/>
            <person name="Gong X.L."/>
            <person name="Li J.R."/>
            <person name="Hui Z."/>
            <person name="Wei X.F."/>
            <person name="Zhong J.M."/>
            <person name="Zhou W.J."/>
            <person name="Shang X."/>
            <person name="Zhang C."/>
            <person name="Liu X.G."/>
            <person name="Tang B.S."/>
            <person name="Xiong F."/>
            <person name="Xu X.M."/>
        </authorList>
    </citation>
    <scope>TISSUE SPECIFICITY</scope>
    <scope>MUTAGENESIS OF ILE-121</scope>
    <scope>FUNCTION</scope>
</reference>
<reference evidence="11" key="5">
    <citation type="journal article" date="2023" name="Cell">
        <title>Structures of sperm flagellar doublet microtubules expand the genetic spectrum of male infertility.</title>
        <authorList>
            <person name="Zhou L."/>
            <person name="Liu H."/>
            <person name="Liu S."/>
            <person name="Yang X."/>
            <person name="Dong Y."/>
            <person name="Pan Y."/>
            <person name="Xiao Z."/>
            <person name="Zheng B."/>
            <person name="Sun Y."/>
            <person name="Huang P."/>
            <person name="Zhang X."/>
            <person name="Hu J."/>
            <person name="Sun R."/>
            <person name="Feng S."/>
            <person name="Zhu Y."/>
            <person name="Liu M."/>
            <person name="Gui M."/>
            <person name="Wu J."/>
        </authorList>
    </citation>
    <scope>STRUCTURE BY ELECTRON MICROSCOPY (3.50 ANGSTROMS) OF SPERM FLAGELLAR DOUBLET MICROTUBULES</scope>
    <scope>FUNCTION</scope>
    <scope>SUBCELLULAR LOCATION</scope>
    <scope>SUBUNIT</scope>
</reference>
<reference evidence="12" key="6">
    <citation type="journal article" date="2023" name="Cell">
        <title>De novo protein identification in mammalian sperm using in situ cryoelectron tomography and AlphaFold2 docking.</title>
        <authorList>
            <person name="Chen Z."/>
            <person name="Shiozaki M."/>
            <person name="Haas K.M."/>
            <person name="Skinner W.M."/>
            <person name="Zhao S."/>
            <person name="Guo C."/>
            <person name="Polacco B.J."/>
            <person name="Yu Z."/>
            <person name="Krogan N.J."/>
            <person name="Lishko P.V."/>
            <person name="Kaake R.M."/>
            <person name="Vale R.D."/>
            <person name="Agard D.A."/>
        </authorList>
    </citation>
    <scope>STRUCTURE BY ELECTRON MICROSCOPY (7.70 ANGSTROMS) OF SPERM FLAGELLAR DOUBLET MICROTUBULES</scope>
    <scope>FUNCTION</scope>
    <scope>SUBCELLULAR LOCATION</scope>
    <scope>SUBUNIT</scope>
</reference>
<reference evidence="9 10" key="7">
    <citation type="journal article" date="2023" name="Cell Discov.">
        <title>In-cell structural insight into the stability of sperm microtubule doublet.</title>
        <authorList>
            <person name="Tai L."/>
            <person name="Yin G."/>
            <person name="Huang X."/>
            <person name="Sun F."/>
            <person name="Zhu Y."/>
        </authorList>
    </citation>
    <scope>STRUCTURE BY ELECTRON MICROSCOPY (4.50 ANGSTROMS)</scope>
    <scope>FUNCTION</scope>
    <scope>SUBUNIT</scope>
    <scope>SUBCELLULAR LOCATION</scope>
</reference>